<accession>Q58705</accession>
<keyword id="KW-1003">Cell membrane</keyword>
<keyword id="KW-0472">Membrane</keyword>
<keyword id="KW-1185">Reference proteome</keyword>
<keyword id="KW-0812">Transmembrane</keyword>
<keyword id="KW-1133">Transmembrane helix</keyword>
<organism>
    <name type="scientific">Methanocaldococcus jannaschii (strain ATCC 43067 / DSM 2661 / JAL-1 / JCM 10045 / NBRC 100440)</name>
    <name type="common">Methanococcus jannaschii</name>
    <dbReference type="NCBI Taxonomy" id="243232"/>
    <lineage>
        <taxon>Archaea</taxon>
        <taxon>Methanobacteriati</taxon>
        <taxon>Methanobacteriota</taxon>
        <taxon>Methanomada group</taxon>
        <taxon>Methanococci</taxon>
        <taxon>Methanococcales</taxon>
        <taxon>Methanocaldococcaceae</taxon>
        <taxon>Methanocaldococcus</taxon>
    </lineage>
</organism>
<sequence length="481" mass="52543">MNYLPMMIVFPLIMAIIMNLLHGKEKAVKYITFITAAILIILPFISQYGYYYFGGHGVVNGWVSGIAYLYNPAKQAIIVTLSLIASLVLITGMGEKLKNNMFVTLSLMGFASIAAIVLADDIFNLYVFFEIVSIVQAGLVFLSGTEEAYKAGLRYMIMGNVAAALMLLGIAFLLASTGTLNITDMKHYLLVDNPMIYGGLLLLIVGLAYGAGLPPFHNVKADLYARSKGFISAMLQTYSKFVLVGLMIIILKLFNGLDYFASAHAVLIALGVLAMVFGVVMALLQSDYKKLLAYHAISQGGYVATGLALGTPLGIVAGIFHAINHVIYKSALFLGAYIVSCKRGSNLHKLGGLLPLMPSVAFMVLCAKLAISGIPPFNGFQSKWMLAQAAMQVNMPEIAIIMIIVSIGTFVSMMKAFYLIYLKPVDEETLKEYQNKEVPKLAVFSLFVLTALCIIIGLYPDIVTNYLWDYAKELGVNYYLK</sequence>
<gene>
    <name type="ordered locus">MJ1309</name>
</gene>
<feature type="chain" id="PRO_0000107267" description="Uncharacterized protein MJ1309">
    <location>
        <begin position="1"/>
        <end position="481"/>
    </location>
</feature>
<feature type="transmembrane region" description="Helical" evidence="1">
    <location>
        <begin position="3"/>
        <end position="23"/>
    </location>
</feature>
<feature type="transmembrane region" description="Helical" evidence="1">
    <location>
        <begin position="33"/>
        <end position="53"/>
    </location>
</feature>
<feature type="transmembrane region" description="Helical" evidence="1">
    <location>
        <begin position="75"/>
        <end position="95"/>
    </location>
</feature>
<feature type="transmembrane region" description="Helical" evidence="1">
    <location>
        <begin position="99"/>
        <end position="119"/>
    </location>
</feature>
<feature type="transmembrane region" description="Helical" evidence="1">
    <location>
        <begin position="122"/>
        <end position="142"/>
    </location>
</feature>
<feature type="transmembrane region" description="Helical" evidence="1">
    <location>
        <begin position="155"/>
        <end position="175"/>
    </location>
</feature>
<feature type="transmembrane region" description="Helical" evidence="1">
    <location>
        <begin position="196"/>
        <end position="216"/>
    </location>
</feature>
<feature type="transmembrane region" description="Helical" evidence="1">
    <location>
        <begin position="241"/>
        <end position="261"/>
    </location>
</feature>
<feature type="transmembrane region" description="Helical" evidence="1">
    <location>
        <begin position="264"/>
        <end position="284"/>
    </location>
</feature>
<feature type="transmembrane region" description="Helical" evidence="1">
    <location>
        <begin position="303"/>
        <end position="323"/>
    </location>
</feature>
<feature type="transmembrane region" description="Helical" evidence="1">
    <location>
        <begin position="351"/>
        <end position="371"/>
    </location>
</feature>
<feature type="transmembrane region" description="Helical" evidence="1">
    <location>
        <begin position="400"/>
        <end position="420"/>
    </location>
</feature>
<feature type="transmembrane region" description="Helical" evidence="1">
    <location>
        <begin position="443"/>
        <end position="463"/>
    </location>
</feature>
<reference key="1">
    <citation type="journal article" date="1996" name="Science">
        <title>Complete genome sequence of the methanogenic archaeon, Methanococcus jannaschii.</title>
        <authorList>
            <person name="Bult C.J."/>
            <person name="White O."/>
            <person name="Olsen G.J."/>
            <person name="Zhou L."/>
            <person name="Fleischmann R.D."/>
            <person name="Sutton G.G."/>
            <person name="Blake J.A."/>
            <person name="FitzGerald L.M."/>
            <person name="Clayton R.A."/>
            <person name="Gocayne J.D."/>
            <person name="Kerlavage A.R."/>
            <person name="Dougherty B.A."/>
            <person name="Tomb J.-F."/>
            <person name="Adams M.D."/>
            <person name="Reich C.I."/>
            <person name="Overbeek R."/>
            <person name="Kirkness E.F."/>
            <person name="Weinstock K.G."/>
            <person name="Merrick J.M."/>
            <person name="Glodek A."/>
            <person name="Scott J.L."/>
            <person name="Geoghagen N.S.M."/>
            <person name="Weidman J.F."/>
            <person name="Fuhrmann J.L."/>
            <person name="Nguyen D."/>
            <person name="Utterback T.R."/>
            <person name="Kelley J.M."/>
            <person name="Peterson J.D."/>
            <person name="Sadow P.W."/>
            <person name="Hanna M.C."/>
            <person name="Cotton M.D."/>
            <person name="Roberts K.M."/>
            <person name="Hurst M.A."/>
            <person name="Kaine B.P."/>
            <person name="Borodovsky M."/>
            <person name="Klenk H.-P."/>
            <person name="Fraser C.M."/>
            <person name="Smith H.O."/>
            <person name="Woese C.R."/>
            <person name="Venter J.C."/>
        </authorList>
    </citation>
    <scope>NUCLEOTIDE SEQUENCE [LARGE SCALE GENOMIC DNA]</scope>
    <source>
        <strain>ATCC 43067 / DSM 2661 / JAL-1 / JCM 10045 / NBRC 100440</strain>
    </source>
</reference>
<dbReference type="EMBL" id="L77117">
    <property type="protein sequence ID" value="AAB99316.1"/>
    <property type="molecule type" value="Genomic_DNA"/>
</dbReference>
<dbReference type="PIR" id="D64463">
    <property type="entry name" value="D64463"/>
</dbReference>
<dbReference type="RefSeq" id="WP_010870826.1">
    <property type="nucleotide sequence ID" value="NC_000909.1"/>
</dbReference>
<dbReference type="SMR" id="Q58705"/>
<dbReference type="FunCoup" id="Q58705">
    <property type="interactions" value="17"/>
</dbReference>
<dbReference type="STRING" id="243232.MJ_1309"/>
<dbReference type="PaxDb" id="243232-MJ_1309"/>
<dbReference type="DNASU" id="1452211"/>
<dbReference type="EnsemblBacteria" id="AAB99316">
    <property type="protein sequence ID" value="AAB99316"/>
    <property type="gene ID" value="MJ_1309"/>
</dbReference>
<dbReference type="GeneID" id="1452211"/>
<dbReference type="KEGG" id="mja:MJ_1309"/>
<dbReference type="eggNOG" id="arCOG01537">
    <property type="taxonomic scope" value="Archaea"/>
</dbReference>
<dbReference type="HOGENOM" id="CLU_007100_9_5_2"/>
<dbReference type="InParanoid" id="Q58705"/>
<dbReference type="OrthoDB" id="371891at2157"/>
<dbReference type="PhylomeDB" id="Q58705"/>
<dbReference type="Proteomes" id="UP000000805">
    <property type="component" value="Chromosome"/>
</dbReference>
<dbReference type="GO" id="GO:0005886">
    <property type="term" value="C:plasma membrane"/>
    <property type="evidence" value="ECO:0007669"/>
    <property type="project" value="UniProtKB-SubCell"/>
</dbReference>
<dbReference type="InterPro" id="IPR050586">
    <property type="entry name" value="CPA3_Na-H_Antiporter_D"/>
</dbReference>
<dbReference type="InterPro" id="IPR001750">
    <property type="entry name" value="ND/Mrp_TM"/>
</dbReference>
<dbReference type="NCBIfam" id="NF004920">
    <property type="entry name" value="PRK06277.1"/>
    <property type="match status" value="1"/>
</dbReference>
<dbReference type="PANTHER" id="PTHR42703:SF1">
    <property type="entry name" value="NA(+)_H(+) ANTIPORTER SUBUNIT D1"/>
    <property type="match status" value="1"/>
</dbReference>
<dbReference type="PANTHER" id="PTHR42703">
    <property type="entry name" value="NADH DEHYDROGENASE"/>
    <property type="match status" value="1"/>
</dbReference>
<dbReference type="Pfam" id="PF00361">
    <property type="entry name" value="Proton_antipo_M"/>
    <property type="match status" value="1"/>
</dbReference>
<proteinExistence type="predicted"/>
<protein>
    <recommendedName>
        <fullName>Uncharacterized protein MJ1309</fullName>
    </recommendedName>
</protein>
<comment type="subcellular location">
    <subcellularLocation>
        <location evidence="2">Cell membrane</location>
        <topology evidence="2">Multi-pass membrane protein</topology>
    </subcellularLocation>
</comment>
<evidence type="ECO:0000255" key="1"/>
<evidence type="ECO:0000305" key="2"/>
<name>Y1309_METJA</name>